<protein>
    <recommendedName>
        <fullName evidence="1">Shikimate dehydrogenase (NADP(+))</fullName>
        <shortName evidence="1">SDH</shortName>
        <ecNumber evidence="1">1.1.1.25</ecNumber>
    </recommendedName>
</protein>
<proteinExistence type="inferred from homology"/>
<organism>
    <name type="scientific">Vibrio cholerae serotype O1 (strain ATCC 39541 / Classical Ogawa 395 / O395)</name>
    <dbReference type="NCBI Taxonomy" id="345073"/>
    <lineage>
        <taxon>Bacteria</taxon>
        <taxon>Pseudomonadati</taxon>
        <taxon>Pseudomonadota</taxon>
        <taxon>Gammaproteobacteria</taxon>
        <taxon>Vibrionales</taxon>
        <taxon>Vibrionaceae</taxon>
        <taxon>Vibrio</taxon>
    </lineage>
</organism>
<gene>
    <name evidence="1" type="primary">aroE</name>
    <name type="ordered locus">VC0395_A2464</name>
    <name type="ordered locus">VC395_0124</name>
</gene>
<evidence type="ECO:0000255" key="1">
    <source>
        <dbReference type="HAMAP-Rule" id="MF_00222"/>
    </source>
</evidence>
<reference key="1">
    <citation type="submission" date="2007-03" db="EMBL/GenBank/DDBJ databases">
        <authorList>
            <person name="Heidelberg J."/>
        </authorList>
    </citation>
    <scope>NUCLEOTIDE SEQUENCE [LARGE SCALE GENOMIC DNA]</scope>
    <source>
        <strain>ATCC 39541 / Classical Ogawa 395 / O395</strain>
    </source>
</reference>
<reference key="2">
    <citation type="journal article" date="2008" name="PLoS ONE">
        <title>A recalibrated molecular clock and independent origins for the cholera pandemic clones.</title>
        <authorList>
            <person name="Feng L."/>
            <person name="Reeves P.R."/>
            <person name="Lan R."/>
            <person name="Ren Y."/>
            <person name="Gao C."/>
            <person name="Zhou Z."/>
            <person name="Ren Y."/>
            <person name="Cheng J."/>
            <person name="Wang W."/>
            <person name="Wang J."/>
            <person name="Qian W."/>
            <person name="Li D."/>
            <person name="Wang L."/>
        </authorList>
    </citation>
    <scope>NUCLEOTIDE SEQUENCE [LARGE SCALE GENOMIC DNA]</scope>
    <source>
        <strain>ATCC 39541 / Classical Ogawa 395 / O395</strain>
    </source>
</reference>
<accession>A5F4C3</accession>
<accession>C3M2I7</accession>
<keyword id="KW-0028">Amino-acid biosynthesis</keyword>
<keyword id="KW-0057">Aromatic amino acid biosynthesis</keyword>
<keyword id="KW-0521">NADP</keyword>
<keyword id="KW-0560">Oxidoreductase</keyword>
<sequence>MASQIDQYAVFGNPINHSKSPFIHTLFARQTQQSMIYTAQCVPVDGFTEAAKHFFAQGGRGCNVTVPFKEEAYRFADRLTERARLAGAVNTLKKLDDGEILGDNTDGEGLVQDLLAQQVLLKGATILLIGAGGAARGVLKPLLDQQPASITVTNRTFAKAEQLAELVAAYGEVKAQAFEQLKQSYDVIINSTSASLDGELPAIDPVIFSSRSVCYDMMYGKGYTVFNQWARQHGCAQAIDGLGMLVGQAAESFMLWRGLRPGTKQILRELRKNLEGAL</sequence>
<comment type="function">
    <text evidence="1">Involved in the biosynthesis of the chorismate, which leads to the biosynthesis of aromatic amino acids. Catalyzes the reversible NADPH linked reduction of 3-dehydroshikimate (DHSA) to yield shikimate (SA).</text>
</comment>
<comment type="catalytic activity">
    <reaction evidence="1">
        <text>shikimate + NADP(+) = 3-dehydroshikimate + NADPH + H(+)</text>
        <dbReference type="Rhea" id="RHEA:17737"/>
        <dbReference type="ChEBI" id="CHEBI:15378"/>
        <dbReference type="ChEBI" id="CHEBI:16630"/>
        <dbReference type="ChEBI" id="CHEBI:36208"/>
        <dbReference type="ChEBI" id="CHEBI:57783"/>
        <dbReference type="ChEBI" id="CHEBI:58349"/>
        <dbReference type="EC" id="1.1.1.25"/>
    </reaction>
</comment>
<comment type="pathway">
    <text evidence="1">Metabolic intermediate biosynthesis; chorismate biosynthesis; chorismate from D-erythrose 4-phosphate and phosphoenolpyruvate: step 4/7.</text>
</comment>
<comment type="subunit">
    <text evidence="1">Homodimer.</text>
</comment>
<comment type="similarity">
    <text evidence="1">Belongs to the shikimate dehydrogenase family.</text>
</comment>
<name>AROE_VIBC3</name>
<dbReference type="EC" id="1.1.1.25" evidence="1"/>
<dbReference type="EMBL" id="CP000627">
    <property type="protein sequence ID" value="ABQ20992.1"/>
    <property type="molecule type" value="Genomic_DNA"/>
</dbReference>
<dbReference type="EMBL" id="CP001235">
    <property type="protein sequence ID" value="ACP08151.1"/>
    <property type="molecule type" value="Genomic_DNA"/>
</dbReference>
<dbReference type="RefSeq" id="WP_000168154.1">
    <property type="nucleotide sequence ID" value="NZ_JAACZH010000018.1"/>
</dbReference>
<dbReference type="SMR" id="A5F4C3"/>
<dbReference type="KEGG" id="vco:VC0395_A2464"/>
<dbReference type="KEGG" id="vcr:VC395_0124"/>
<dbReference type="PATRIC" id="fig|345073.21.peg.115"/>
<dbReference type="eggNOG" id="COG0169">
    <property type="taxonomic scope" value="Bacteria"/>
</dbReference>
<dbReference type="HOGENOM" id="CLU_044063_2_1_6"/>
<dbReference type="OrthoDB" id="9776868at2"/>
<dbReference type="UniPathway" id="UPA00053">
    <property type="reaction ID" value="UER00087"/>
</dbReference>
<dbReference type="Proteomes" id="UP000000249">
    <property type="component" value="Chromosome 2"/>
</dbReference>
<dbReference type="GO" id="GO:0005829">
    <property type="term" value="C:cytosol"/>
    <property type="evidence" value="ECO:0007669"/>
    <property type="project" value="TreeGrafter"/>
</dbReference>
<dbReference type="GO" id="GO:0050661">
    <property type="term" value="F:NADP binding"/>
    <property type="evidence" value="ECO:0007669"/>
    <property type="project" value="InterPro"/>
</dbReference>
<dbReference type="GO" id="GO:0004764">
    <property type="term" value="F:shikimate 3-dehydrogenase (NADP+) activity"/>
    <property type="evidence" value="ECO:0007669"/>
    <property type="project" value="UniProtKB-UniRule"/>
</dbReference>
<dbReference type="GO" id="GO:0008652">
    <property type="term" value="P:amino acid biosynthetic process"/>
    <property type="evidence" value="ECO:0007669"/>
    <property type="project" value="UniProtKB-KW"/>
</dbReference>
<dbReference type="GO" id="GO:0009073">
    <property type="term" value="P:aromatic amino acid family biosynthetic process"/>
    <property type="evidence" value="ECO:0007669"/>
    <property type="project" value="UniProtKB-KW"/>
</dbReference>
<dbReference type="GO" id="GO:0009423">
    <property type="term" value="P:chorismate biosynthetic process"/>
    <property type="evidence" value="ECO:0007669"/>
    <property type="project" value="UniProtKB-UniRule"/>
</dbReference>
<dbReference type="GO" id="GO:0019632">
    <property type="term" value="P:shikimate metabolic process"/>
    <property type="evidence" value="ECO:0007669"/>
    <property type="project" value="InterPro"/>
</dbReference>
<dbReference type="CDD" id="cd01065">
    <property type="entry name" value="NAD_bind_Shikimate_DH"/>
    <property type="match status" value="1"/>
</dbReference>
<dbReference type="FunFam" id="3.40.50.10860:FF:000006">
    <property type="entry name" value="Shikimate dehydrogenase (NADP(+))"/>
    <property type="match status" value="1"/>
</dbReference>
<dbReference type="FunFam" id="3.40.50.720:FF:000104">
    <property type="entry name" value="Shikimate dehydrogenase (NADP(+))"/>
    <property type="match status" value="1"/>
</dbReference>
<dbReference type="Gene3D" id="3.40.50.10860">
    <property type="entry name" value="Leucine Dehydrogenase, chain A, domain 1"/>
    <property type="match status" value="1"/>
</dbReference>
<dbReference type="Gene3D" id="3.40.50.720">
    <property type="entry name" value="NAD(P)-binding Rossmann-like Domain"/>
    <property type="match status" value="1"/>
</dbReference>
<dbReference type="HAMAP" id="MF_00222">
    <property type="entry name" value="Shikimate_DH_AroE"/>
    <property type="match status" value="1"/>
</dbReference>
<dbReference type="InterPro" id="IPR046346">
    <property type="entry name" value="Aminoacid_DH-like_N_sf"/>
</dbReference>
<dbReference type="InterPro" id="IPR036291">
    <property type="entry name" value="NAD(P)-bd_dom_sf"/>
</dbReference>
<dbReference type="InterPro" id="IPR041121">
    <property type="entry name" value="SDH_C"/>
</dbReference>
<dbReference type="InterPro" id="IPR011342">
    <property type="entry name" value="Shikimate_DH"/>
</dbReference>
<dbReference type="InterPro" id="IPR013708">
    <property type="entry name" value="Shikimate_DH-bd_N"/>
</dbReference>
<dbReference type="InterPro" id="IPR022893">
    <property type="entry name" value="Shikimate_DH_fam"/>
</dbReference>
<dbReference type="InterPro" id="IPR006151">
    <property type="entry name" value="Shikm_DH/Glu-tRNA_Rdtase"/>
</dbReference>
<dbReference type="NCBIfam" id="TIGR00507">
    <property type="entry name" value="aroE"/>
    <property type="match status" value="1"/>
</dbReference>
<dbReference type="NCBIfam" id="NF001310">
    <property type="entry name" value="PRK00258.1-2"/>
    <property type="match status" value="1"/>
</dbReference>
<dbReference type="PANTHER" id="PTHR21089:SF1">
    <property type="entry name" value="BIFUNCTIONAL 3-DEHYDROQUINATE DEHYDRATASE_SHIKIMATE DEHYDROGENASE, CHLOROPLASTIC"/>
    <property type="match status" value="1"/>
</dbReference>
<dbReference type="PANTHER" id="PTHR21089">
    <property type="entry name" value="SHIKIMATE DEHYDROGENASE"/>
    <property type="match status" value="1"/>
</dbReference>
<dbReference type="Pfam" id="PF18317">
    <property type="entry name" value="SDH_C"/>
    <property type="match status" value="1"/>
</dbReference>
<dbReference type="Pfam" id="PF01488">
    <property type="entry name" value="Shikimate_DH"/>
    <property type="match status" value="1"/>
</dbReference>
<dbReference type="Pfam" id="PF08501">
    <property type="entry name" value="Shikimate_dh_N"/>
    <property type="match status" value="1"/>
</dbReference>
<dbReference type="SUPFAM" id="SSF53223">
    <property type="entry name" value="Aminoacid dehydrogenase-like, N-terminal domain"/>
    <property type="match status" value="1"/>
</dbReference>
<dbReference type="SUPFAM" id="SSF51735">
    <property type="entry name" value="NAD(P)-binding Rossmann-fold domains"/>
    <property type="match status" value="1"/>
</dbReference>
<feature type="chain" id="PRO_1000071758" description="Shikimate dehydrogenase (NADP(+))">
    <location>
        <begin position="1"/>
        <end position="278"/>
    </location>
</feature>
<feature type="active site" description="Proton acceptor" evidence="1">
    <location>
        <position position="69"/>
    </location>
</feature>
<feature type="binding site" evidence="1">
    <location>
        <begin position="18"/>
        <end position="20"/>
    </location>
    <ligand>
        <name>shikimate</name>
        <dbReference type="ChEBI" id="CHEBI:36208"/>
    </ligand>
</feature>
<feature type="binding site" evidence="1">
    <location>
        <position position="65"/>
    </location>
    <ligand>
        <name>shikimate</name>
        <dbReference type="ChEBI" id="CHEBI:36208"/>
    </ligand>
</feature>
<feature type="binding site" evidence="1">
    <location>
        <position position="81"/>
    </location>
    <ligand>
        <name>NADP(+)</name>
        <dbReference type="ChEBI" id="CHEBI:58349"/>
    </ligand>
</feature>
<feature type="binding site" evidence="1">
    <location>
        <position position="90"/>
    </location>
    <ligand>
        <name>shikimate</name>
        <dbReference type="ChEBI" id="CHEBI:36208"/>
    </ligand>
</feature>
<feature type="binding site" evidence="1">
    <location>
        <position position="106"/>
    </location>
    <ligand>
        <name>shikimate</name>
        <dbReference type="ChEBI" id="CHEBI:36208"/>
    </ligand>
</feature>
<feature type="binding site" evidence="1">
    <location>
        <begin position="130"/>
        <end position="134"/>
    </location>
    <ligand>
        <name>NADP(+)</name>
        <dbReference type="ChEBI" id="CHEBI:58349"/>
    </ligand>
</feature>
<feature type="binding site" evidence="1">
    <location>
        <begin position="154"/>
        <end position="159"/>
    </location>
    <ligand>
        <name>NADP(+)</name>
        <dbReference type="ChEBI" id="CHEBI:58349"/>
    </ligand>
</feature>
<feature type="binding site" evidence="1">
    <location>
        <position position="223"/>
    </location>
    <ligand>
        <name>shikimate</name>
        <dbReference type="ChEBI" id="CHEBI:36208"/>
    </ligand>
</feature>
<feature type="binding site" evidence="1">
    <location>
        <position position="241"/>
    </location>
    <ligand>
        <name>NADP(+)</name>
        <dbReference type="ChEBI" id="CHEBI:58349"/>
    </ligand>
</feature>